<reference key="1">
    <citation type="journal article" date="2006" name="BMC Genomics">
        <title>Complete genome sequence of Shigella flexneri 5b and comparison with Shigella flexneri 2a.</title>
        <authorList>
            <person name="Nie H."/>
            <person name="Yang F."/>
            <person name="Zhang X."/>
            <person name="Yang J."/>
            <person name="Chen L."/>
            <person name="Wang J."/>
            <person name="Xiong Z."/>
            <person name="Peng J."/>
            <person name="Sun L."/>
            <person name="Dong J."/>
            <person name="Xue Y."/>
            <person name="Xu X."/>
            <person name="Chen S."/>
            <person name="Yao Z."/>
            <person name="Shen Y."/>
            <person name="Jin Q."/>
        </authorList>
    </citation>
    <scope>NUCLEOTIDE SEQUENCE [LARGE SCALE GENOMIC DNA]</scope>
    <source>
        <strain>8401</strain>
    </source>
</reference>
<feature type="chain" id="PRO_1000064336" description="L-carnitine/gamma-butyrobetaine antiporter">
    <location>
        <begin position="1"/>
        <end position="504"/>
    </location>
</feature>
<feature type="transmembrane region" description="Helical" evidence="1">
    <location>
        <begin position="10"/>
        <end position="30"/>
    </location>
</feature>
<feature type="transmembrane region" description="Helical" evidence="1">
    <location>
        <begin position="51"/>
        <end position="71"/>
    </location>
</feature>
<feature type="transmembrane region" description="Helical" evidence="1">
    <location>
        <begin position="92"/>
        <end position="112"/>
    </location>
</feature>
<feature type="transmembrane region" description="Helical" evidence="1">
    <location>
        <begin position="143"/>
        <end position="163"/>
    </location>
</feature>
<feature type="transmembrane region" description="Helical" evidence="1">
    <location>
        <begin position="195"/>
        <end position="215"/>
    </location>
</feature>
<feature type="transmembrane region" description="Helical" evidence="1">
    <location>
        <begin position="231"/>
        <end position="251"/>
    </location>
</feature>
<feature type="transmembrane region" description="Helical" evidence="1">
    <location>
        <begin position="263"/>
        <end position="283"/>
    </location>
</feature>
<feature type="transmembrane region" description="Helical" evidence="1">
    <location>
        <begin position="316"/>
        <end position="336"/>
    </location>
</feature>
<feature type="transmembrane region" description="Helical" evidence="1">
    <location>
        <begin position="347"/>
        <end position="367"/>
    </location>
</feature>
<feature type="transmembrane region" description="Helical" evidence="1">
    <location>
        <begin position="398"/>
        <end position="418"/>
    </location>
</feature>
<feature type="transmembrane region" description="Helical" evidence="1">
    <location>
        <begin position="446"/>
        <end position="466"/>
    </location>
</feature>
<feature type="transmembrane region" description="Helical" evidence="1">
    <location>
        <begin position="475"/>
        <end position="495"/>
    </location>
</feature>
<gene>
    <name evidence="1" type="primary">caiT</name>
    <name type="ordered locus">SFV_0034</name>
</gene>
<proteinExistence type="inferred from homology"/>
<name>CAIT_SHIF8</name>
<evidence type="ECO:0000255" key="1">
    <source>
        <dbReference type="HAMAP-Rule" id="MF_01049"/>
    </source>
</evidence>
<protein>
    <recommendedName>
        <fullName evidence="1">L-carnitine/gamma-butyrobetaine antiporter</fullName>
    </recommendedName>
</protein>
<accession>Q0T8F4</accession>
<keyword id="KW-0050">Antiport</keyword>
<keyword id="KW-0997">Cell inner membrane</keyword>
<keyword id="KW-1003">Cell membrane</keyword>
<keyword id="KW-0472">Membrane</keyword>
<keyword id="KW-0812">Transmembrane</keyword>
<keyword id="KW-1133">Transmembrane helix</keyword>
<keyword id="KW-0813">Transport</keyword>
<sequence length="504" mass="56630">MKNEKRKTGIEPKVFFPPLIIVGILCWLTVRDLDAANVVINAVFSYVTNVWGWAFEWYMVVMLFGWFWLVFGPYAKKRLGNEPPEFSTASWIFMMFASCTSAAVLFWGSIEIYYYISTPPFGLEPNSTGAKELGLAYSLFHWGPLPWATYSFLSVAFAYFFFVRKMEVIRPSSTLVPLVGEKHAKGLFGTIVDNFYLVALIFAMGTSLGLATPLVTECMQWLFGIPHTLQLDAIIITCWIILHAICVACGLQKGGRIPSDVRSYLSFLMLGWVFIVSGASFIMNYFTDSVGMLLMYLPRMLFYTDPIAKGGFPQGWTVFYWAWWVIYAIQMSIFLARISRGRTVRELCFGMVMGLTASTWILWTVLGSNTLLLMDKNIINIPNLIEQYGVARAIIETWAALPLSTATMWGFFILCFIATVTLVNACSYTLAMSTCREVRDGEEPPLLVRIGWSILVGIIGIVLLALGGLKPIQTAIIAGGCPLFFVNIMVTLSFIKDAKQNWKD</sequence>
<comment type="function">
    <text evidence="1">Catalyzes the exchange of L-carnitine for gamma-butyrobetaine.</text>
</comment>
<comment type="catalytic activity">
    <reaction evidence="1">
        <text>4-(trimethylamino)butanoate(in) + (R)-carnitine(out) = 4-(trimethylamino)butanoate(out) + (R)-carnitine(in)</text>
        <dbReference type="Rhea" id="RHEA:29427"/>
        <dbReference type="ChEBI" id="CHEBI:16244"/>
        <dbReference type="ChEBI" id="CHEBI:16347"/>
    </reaction>
</comment>
<comment type="pathway">
    <text evidence="1">Amine and polyamine metabolism; carnitine metabolism.</text>
</comment>
<comment type="subunit">
    <text evidence="1">Homotrimer.</text>
</comment>
<comment type="subcellular location">
    <subcellularLocation>
        <location evidence="1">Cell inner membrane</location>
        <topology evidence="1">Multi-pass membrane protein</topology>
    </subcellularLocation>
</comment>
<comment type="similarity">
    <text evidence="1">Belongs to the BCCT transporter (TC 2.A.15) family. CaiT subfamily.</text>
</comment>
<organism>
    <name type="scientific">Shigella flexneri serotype 5b (strain 8401)</name>
    <dbReference type="NCBI Taxonomy" id="373384"/>
    <lineage>
        <taxon>Bacteria</taxon>
        <taxon>Pseudomonadati</taxon>
        <taxon>Pseudomonadota</taxon>
        <taxon>Gammaproteobacteria</taxon>
        <taxon>Enterobacterales</taxon>
        <taxon>Enterobacteriaceae</taxon>
        <taxon>Shigella</taxon>
    </lineage>
</organism>
<dbReference type="EMBL" id="CP000266">
    <property type="protein sequence ID" value="ABF02322.1"/>
    <property type="molecule type" value="Genomic_DNA"/>
</dbReference>
<dbReference type="RefSeq" id="WP_000787095.1">
    <property type="nucleotide sequence ID" value="NC_008258.1"/>
</dbReference>
<dbReference type="SMR" id="Q0T8F4"/>
<dbReference type="KEGG" id="sfv:SFV_0034"/>
<dbReference type="HOGENOM" id="CLU_010118_6_0_6"/>
<dbReference type="UniPathway" id="UPA00117"/>
<dbReference type="Proteomes" id="UP000000659">
    <property type="component" value="Chromosome"/>
</dbReference>
<dbReference type="GO" id="GO:0005886">
    <property type="term" value="C:plasma membrane"/>
    <property type="evidence" value="ECO:0007669"/>
    <property type="project" value="UniProtKB-SubCell"/>
</dbReference>
<dbReference type="GO" id="GO:0044667">
    <property type="term" value="F:(R)-carnitine:4-(trimethylammonio)butanoate antiporter activity"/>
    <property type="evidence" value="ECO:0007669"/>
    <property type="project" value="UniProtKB-UniRule"/>
</dbReference>
<dbReference type="GO" id="GO:1900751">
    <property type="term" value="P:4-(trimethylammonio)butanoate transport"/>
    <property type="evidence" value="ECO:0007669"/>
    <property type="project" value="InterPro"/>
</dbReference>
<dbReference type="GO" id="GO:0009437">
    <property type="term" value="P:carnitine metabolic process"/>
    <property type="evidence" value="ECO:0007669"/>
    <property type="project" value="UniProtKB-UniRule"/>
</dbReference>
<dbReference type="HAMAP" id="MF_01049">
    <property type="entry name" value="CaiT"/>
    <property type="match status" value="1"/>
</dbReference>
<dbReference type="InterPro" id="IPR018093">
    <property type="entry name" value="BCCT_CS"/>
</dbReference>
<dbReference type="InterPro" id="IPR000060">
    <property type="entry name" value="BCCT_transptr"/>
</dbReference>
<dbReference type="InterPro" id="IPR023449">
    <property type="entry name" value="BCCT_transptr_CaiT"/>
</dbReference>
<dbReference type="NCBIfam" id="TIGR00842">
    <property type="entry name" value="bcct"/>
    <property type="match status" value="1"/>
</dbReference>
<dbReference type="NCBIfam" id="NF002887">
    <property type="entry name" value="PRK03356.1"/>
    <property type="match status" value="1"/>
</dbReference>
<dbReference type="PANTHER" id="PTHR30047">
    <property type="entry name" value="HIGH-AFFINITY CHOLINE TRANSPORT PROTEIN-RELATED"/>
    <property type="match status" value="1"/>
</dbReference>
<dbReference type="PANTHER" id="PTHR30047:SF11">
    <property type="entry name" value="L-CARNITINE_GAMMA-BUTYROBETAINE ANTIPORTER"/>
    <property type="match status" value="1"/>
</dbReference>
<dbReference type="Pfam" id="PF02028">
    <property type="entry name" value="BCCT"/>
    <property type="match status" value="1"/>
</dbReference>
<dbReference type="PROSITE" id="PS01303">
    <property type="entry name" value="BCCT"/>
    <property type="match status" value="1"/>
</dbReference>